<gene>
    <name type="primary">pepDB</name>
    <name type="ordered locus">M6_Spy1758</name>
</gene>
<comment type="catalytic activity">
    <reaction>
        <text>an L-aminoacyl-L-amino acid + H2O = 2 an L-alpha-amino acid</text>
        <dbReference type="Rhea" id="RHEA:48940"/>
        <dbReference type="ChEBI" id="CHEBI:15377"/>
        <dbReference type="ChEBI" id="CHEBI:59869"/>
        <dbReference type="ChEBI" id="CHEBI:77460"/>
        <dbReference type="EC" id="3.4.13.19"/>
    </reaction>
</comment>
<comment type="similarity">
    <text evidence="2">Belongs to the peptidase C69 family.</text>
</comment>
<comment type="sequence caution" evidence="2">
    <conflict type="frameshift">
        <sequence resource="EMBL-CDS" id="AAT87893"/>
    </conflict>
</comment>
<protein>
    <recommendedName>
        <fullName>Probable dipeptidase B</fullName>
        <ecNumber>3.4.13.19</ecNumber>
    </recommendedName>
</protein>
<name>PEPDB_STRP6</name>
<feature type="chain" id="PRO_0000220392" description="Probable dipeptidase B">
    <location>
        <begin position="1"/>
        <end position="499"/>
    </location>
</feature>
<feature type="active site" evidence="1">
    <location>
        <position position="26"/>
    </location>
</feature>
<organism>
    <name type="scientific">Streptococcus pyogenes serotype M6 (strain ATCC BAA-946 / MGAS10394)</name>
    <dbReference type="NCBI Taxonomy" id="286636"/>
    <lineage>
        <taxon>Bacteria</taxon>
        <taxon>Bacillati</taxon>
        <taxon>Bacillota</taxon>
        <taxon>Bacilli</taxon>
        <taxon>Lactobacillales</taxon>
        <taxon>Streptococcaceae</taxon>
        <taxon>Streptococcus</taxon>
    </lineage>
</organism>
<dbReference type="EC" id="3.4.13.19"/>
<dbReference type="EMBL" id="CP000003">
    <property type="protein sequence ID" value="AAT87893.1"/>
    <property type="status" value="ALT_FRAME"/>
    <property type="molecule type" value="Genomic_DNA"/>
</dbReference>
<dbReference type="MEROPS" id="C69.002"/>
<dbReference type="KEGG" id="spa:M6_Spy1758"/>
<dbReference type="HOGENOM" id="CLU_014823_4_2_9"/>
<dbReference type="Proteomes" id="UP000001167">
    <property type="component" value="Chromosome"/>
</dbReference>
<dbReference type="GO" id="GO:0070004">
    <property type="term" value="F:cysteine-type exopeptidase activity"/>
    <property type="evidence" value="ECO:0007669"/>
    <property type="project" value="InterPro"/>
</dbReference>
<dbReference type="GO" id="GO:0016805">
    <property type="term" value="F:dipeptidase activity"/>
    <property type="evidence" value="ECO:0007669"/>
    <property type="project" value="UniProtKB-KW"/>
</dbReference>
<dbReference type="GO" id="GO:0006508">
    <property type="term" value="P:proteolysis"/>
    <property type="evidence" value="ECO:0007669"/>
    <property type="project" value="UniProtKB-KW"/>
</dbReference>
<dbReference type="Gene3D" id="3.60.60.10">
    <property type="entry name" value="Penicillin V Acylase, Chain A"/>
    <property type="match status" value="1"/>
</dbReference>
<dbReference type="InterPro" id="IPR047804">
    <property type="entry name" value="C69_dipept_A-like"/>
</dbReference>
<dbReference type="InterPro" id="IPR005322">
    <property type="entry name" value="Peptidase_C69"/>
</dbReference>
<dbReference type="NCBIfam" id="NF033678">
    <property type="entry name" value="C69_fam_dipept"/>
    <property type="match status" value="1"/>
</dbReference>
<dbReference type="PANTHER" id="PTHR12994:SF17">
    <property type="entry name" value="LD30995P"/>
    <property type="match status" value="1"/>
</dbReference>
<dbReference type="PANTHER" id="PTHR12994">
    <property type="entry name" value="SECERNIN"/>
    <property type="match status" value="1"/>
</dbReference>
<dbReference type="Pfam" id="PF03577">
    <property type="entry name" value="Peptidase_C69"/>
    <property type="match status" value="1"/>
</dbReference>
<accession>Q5X9M0</accession>
<sequence>MINKKISLGVLSILTAFSLQSVSYACTGFIIGKDLTKDGSLLXGRTEDLEPHHNKNFIVRLAKDNPAGEKWKDLSNGFEYPLPEHSYRYSAIPDVTPNKGVYDEAGFNECGVSMSATVSASANDAIQKIDPYVKNGLAESSMASVILPSVKTAREGVALIAKIVTEKGAAEGNIVTLADKDGIWYMEILSGHQYVAIKFPDDKYAVFPNTFYLGHVDFNDKENTIASEDVEKVAKKAKSYIEVDGKFHIAKSYNPPLNDANRSRSFSGIKSLDPDSKVTYKDSNYELLQSTDKTFSLEDAMKLQRNRFEGLDLKPLDQMALDGKGKPKSKKAVKGYAYPISNPNVMEAHIFQLKKDIPAELGGGVMWLSIGSPRNAPYLPYLGNISRTYEAYQEKSTQYNDKSWYWTVSHINDLVAAHPKPFGTKVIDEIKGLEKTWIAEQDKTTKEISDLVVSDPKAAQEKADKISLDRAEKTFKRLKAIEAKLVKEKPKNKKGLNRS</sequence>
<reference key="1">
    <citation type="journal article" date="2004" name="J. Infect. Dis.">
        <title>Progress toward characterization of the group A Streptococcus metagenome: complete genome sequence of a macrolide-resistant serotype M6 strain.</title>
        <authorList>
            <person name="Banks D.J."/>
            <person name="Porcella S.F."/>
            <person name="Barbian K.D."/>
            <person name="Beres S.B."/>
            <person name="Philips L.E."/>
            <person name="Voyich J.M."/>
            <person name="DeLeo F.R."/>
            <person name="Martin J.M."/>
            <person name="Somerville G.A."/>
            <person name="Musser J.M."/>
        </authorList>
    </citation>
    <scope>NUCLEOTIDE SEQUENCE [LARGE SCALE GENOMIC DNA]</scope>
    <source>
        <strain>ATCC BAA-946 / MGAS10394</strain>
    </source>
</reference>
<proteinExistence type="inferred from homology"/>
<evidence type="ECO:0000255" key="1"/>
<evidence type="ECO:0000305" key="2"/>
<keyword id="KW-0224">Dipeptidase</keyword>
<keyword id="KW-0378">Hydrolase</keyword>
<keyword id="KW-0645">Protease</keyword>